<feature type="signal peptide" evidence="1">
    <location>
        <begin position="1"/>
        <end position="20"/>
    </location>
</feature>
<feature type="chain" id="PRO_0000429696" description="Outer membrane transporter CdiB-2">
    <location>
        <begin position="21"/>
        <end position="584"/>
    </location>
</feature>
<feature type="domain" description="POTRA" evidence="2">
    <location>
        <begin position="98"/>
        <end position="171"/>
    </location>
</feature>
<feature type="region of interest" description="Disordered" evidence="3">
    <location>
        <begin position="24"/>
        <end position="72"/>
    </location>
</feature>
<feature type="compositionally biased region" description="Low complexity" evidence="3">
    <location>
        <begin position="24"/>
        <end position="44"/>
    </location>
</feature>
<protein>
    <recommendedName>
        <fullName>Outer membrane transporter CdiB-2</fullName>
        <shortName>CdiB-2</shortName>
    </recommendedName>
    <alternativeName>
        <fullName>CdiB-II</fullName>
    </alternativeName>
</protein>
<name>CDIB2_BURP2</name>
<evidence type="ECO:0000255" key="1"/>
<evidence type="ECO:0000255" key="2">
    <source>
        <dbReference type="PROSITE-ProRule" id="PRU01115"/>
    </source>
</evidence>
<evidence type="ECO:0000256" key="3">
    <source>
        <dbReference type="SAM" id="MobiDB-lite"/>
    </source>
</evidence>
<evidence type="ECO:0000269" key="4">
    <source>
    </source>
</evidence>
<evidence type="ECO:0000305" key="5"/>
<sequence length="584" mass="63654">MATRFAILPVTALITLTAQAQQAPTPNDQAAAARANAEQNQQAQQRRDAQQRDATVQAPGVRSDVPRPEAYPVLPTETPCFQIDRFALDVPDSLPAASKAQGASALPMDRFAFARDWLAHYAGQCIGKQGVDLIVKGLSQAILARGYITTRVLVPEQDLSTGALKLALIPGVIRHVRFEDEKLLGTWKTAFPTRDGDVLNLRDIEQGLEQMKRVSSQDVSMRIAPGDMPGESDVVLDVKRGKPWTVVASIDNSGTRATGKLQGNVSLGIDNPLGLNDIFNVGFNQDLEFGDKRFGSHGWNAFYSIPWGYWTGTLSAYTSTYFQPLAAVNQTFVASGNMKTVDFRLNRVLTRSRNDVLGAQVRLTRRFGDSYIEGTTIPSSHQNATFLEFGLNDRHYFGSSQFDGSLAYRQGLGWLGSTDSMFAAEGGQTYRFKMVVLDANLSTPFVIGTQPFKYVTTFHGQYTGNTVSYLDSVTIGSRYTVRGFDGETLLAGSRGFYWRNELQVPVAQTGLSAYAGLDYGRVWGPEPVALVGTQLAGAVIGVKGSLMTRFGGYGYDLFAGTPVYKPSGFPTARVTVGFQLTAQF</sequence>
<dbReference type="EMBL" id="CP002834">
    <property type="status" value="NOT_ANNOTATED_CDS"/>
    <property type="molecule type" value="Genomic_DNA"/>
</dbReference>
<dbReference type="RefSeq" id="WP_038742387.1">
    <property type="nucleotide sequence ID" value="NC_017832.1"/>
</dbReference>
<dbReference type="SMR" id="P0DMJ8"/>
<dbReference type="TCDB" id="1.B.20.1.10">
    <property type="family name" value="the two-partner secretion (tps) family"/>
</dbReference>
<dbReference type="Proteomes" id="UP000010087">
    <property type="component" value="Chromosome 2"/>
</dbReference>
<dbReference type="GO" id="GO:0009279">
    <property type="term" value="C:cell outer membrane"/>
    <property type="evidence" value="ECO:0007669"/>
    <property type="project" value="UniProtKB-SubCell"/>
</dbReference>
<dbReference type="GO" id="GO:0046930">
    <property type="term" value="C:pore complex"/>
    <property type="evidence" value="ECO:0007669"/>
    <property type="project" value="UniProtKB-KW"/>
</dbReference>
<dbReference type="GO" id="GO:0098046">
    <property type="term" value="C:type V protein secretion system complex"/>
    <property type="evidence" value="ECO:0007669"/>
    <property type="project" value="TreeGrafter"/>
</dbReference>
<dbReference type="GO" id="GO:0015288">
    <property type="term" value="F:porin activity"/>
    <property type="evidence" value="ECO:0007669"/>
    <property type="project" value="UniProtKB-KW"/>
</dbReference>
<dbReference type="GO" id="GO:0008320">
    <property type="term" value="F:protein transmembrane transporter activity"/>
    <property type="evidence" value="ECO:0007669"/>
    <property type="project" value="TreeGrafter"/>
</dbReference>
<dbReference type="GO" id="GO:0006811">
    <property type="term" value="P:monoatomic ion transport"/>
    <property type="evidence" value="ECO:0007669"/>
    <property type="project" value="UniProtKB-KW"/>
</dbReference>
<dbReference type="GO" id="GO:0046819">
    <property type="term" value="P:protein secretion by the type V secretion system"/>
    <property type="evidence" value="ECO:0007669"/>
    <property type="project" value="TreeGrafter"/>
</dbReference>
<dbReference type="Gene3D" id="3.10.20.310">
    <property type="entry name" value="membrane protein fhac"/>
    <property type="match status" value="1"/>
</dbReference>
<dbReference type="Gene3D" id="2.40.160.50">
    <property type="entry name" value="membrane protein fhac: a member of the omp85/tpsb transporter family"/>
    <property type="match status" value="1"/>
</dbReference>
<dbReference type="InterPro" id="IPR005565">
    <property type="entry name" value="Hemolysn_activator_HlyB_C"/>
</dbReference>
<dbReference type="InterPro" id="IPR013686">
    <property type="entry name" value="Polypept-transport_assoc_ShlB"/>
</dbReference>
<dbReference type="InterPro" id="IPR034746">
    <property type="entry name" value="POTRA"/>
</dbReference>
<dbReference type="InterPro" id="IPR035251">
    <property type="entry name" value="ShlB_POTRA"/>
</dbReference>
<dbReference type="InterPro" id="IPR027282">
    <property type="entry name" value="TPS"/>
</dbReference>
<dbReference type="InterPro" id="IPR051544">
    <property type="entry name" value="TPS_OM_transporter"/>
</dbReference>
<dbReference type="PANTHER" id="PTHR34597:SF3">
    <property type="entry name" value="OUTER MEMBRANE TRANSPORTER CDIB"/>
    <property type="match status" value="1"/>
</dbReference>
<dbReference type="PANTHER" id="PTHR34597">
    <property type="entry name" value="SLR1661 PROTEIN"/>
    <property type="match status" value="1"/>
</dbReference>
<dbReference type="Pfam" id="PF08479">
    <property type="entry name" value="POTRA_2"/>
    <property type="match status" value="1"/>
</dbReference>
<dbReference type="Pfam" id="PF17287">
    <property type="entry name" value="POTRA_3"/>
    <property type="match status" value="1"/>
</dbReference>
<dbReference type="Pfam" id="PF03865">
    <property type="entry name" value="ShlB"/>
    <property type="match status" value="1"/>
</dbReference>
<dbReference type="PIRSF" id="PIRSF029745">
    <property type="entry name" value="FhaC"/>
    <property type="match status" value="1"/>
</dbReference>
<dbReference type="PROSITE" id="PS51779">
    <property type="entry name" value="POTRA"/>
    <property type="match status" value="1"/>
</dbReference>
<reference key="1">
    <citation type="journal article" date="2012" name="PLoS ONE">
        <title>Evolution of Burkholderia pseudomallei in recurrent melioidosis.</title>
        <authorList>
            <person name="Hayden H.S."/>
            <person name="Lim R."/>
            <person name="Brittnacher M.J."/>
            <person name="Sims E.H."/>
            <person name="Ramage E.R."/>
            <person name="Fong C."/>
            <person name="Wu Z."/>
            <person name="Crist E."/>
            <person name="Chang J."/>
            <person name="Zhou Y."/>
            <person name="Radey M."/>
            <person name="Rohmer L."/>
            <person name="Haugen E."/>
            <person name="Gillett W."/>
            <person name="Wuthiekanun V."/>
            <person name="Peacock S.J."/>
            <person name="Kaul R."/>
            <person name="Miller S.I."/>
            <person name="Manoil C."/>
            <person name="Jacobs M.A."/>
        </authorList>
    </citation>
    <scope>NUCLEOTIDE SEQUENCE [LARGE SCALE GENOMIC DNA]</scope>
    <source>
        <strain>1026b</strain>
    </source>
</reference>
<reference key="2">
    <citation type="journal article" date="2012" name="Mol. Microbiol.">
        <title>The toxin/immunity network of Burkholderia pseudomallei contact-dependent growth inhibition (CDI) systems.</title>
        <authorList>
            <person name="Nikolakakis K."/>
            <person name="Amber S."/>
            <person name="Wilbur J.S."/>
            <person name="Diner E.J."/>
            <person name="Aoki S.K."/>
            <person name="Poole S.J."/>
            <person name="Tuanyok A."/>
            <person name="Keim P.S."/>
            <person name="Peacock S."/>
            <person name="Hayes C.S."/>
            <person name="Low D.A."/>
        </authorList>
    </citation>
    <scope>FUNCTION</scope>
    <scope>DISRUPTION PHENOTYPE</scope>
    <source>
        <strain>1026b</strain>
    </source>
</reference>
<keyword id="KW-0998">Cell outer membrane</keyword>
<keyword id="KW-0406">Ion transport</keyword>
<keyword id="KW-0472">Membrane</keyword>
<keyword id="KW-0626">Porin</keyword>
<keyword id="KW-0653">Protein transport</keyword>
<keyword id="KW-0732">Signal</keyword>
<keyword id="KW-0812">Transmembrane</keyword>
<keyword id="KW-1134">Transmembrane beta strand</keyword>
<keyword id="KW-0813">Transport</keyword>
<accession>P0DMJ8</accession>
<proteinExistence type="inferred from homology"/>
<gene>
    <name type="primary">cdiB2</name>
    <name type="ordered locus">BP1026B_II2204</name>
</gene>
<organism>
    <name type="scientific">Burkholderia pseudomallei (strain 1026b)</name>
    <dbReference type="NCBI Taxonomy" id="884204"/>
    <lineage>
        <taxon>Bacteria</taxon>
        <taxon>Pseudomonadati</taxon>
        <taxon>Pseudomonadota</taxon>
        <taxon>Betaproteobacteria</taxon>
        <taxon>Burkholderiales</taxon>
        <taxon>Burkholderiaceae</taxon>
        <taxon>Burkholderia</taxon>
        <taxon>pseudomallei group</taxon>
    </lineage>
</organism>
<comment type="function">
    <text evidence="4">Potential outer membrane protein component of a toxin-immunity protein module, which functions as a cellular contact-dependent growth inhibition (CDI) system. CDI modules allow bacteria to communicate with and inhibit the growth of closely related neighboring bacteria in a contact-dependent fashion. This protein may be required for secretion and assembly of the CdiA toxin protein.</text>
</comment>
<comment type="function">
    <text evidence="4">Expression of this cdiAIB locus in B.thailandensis confers protection against other bacteria carrying the locus; growth inhibition requires cellular contact.</text>
</comment>
<comment type="function">
    <text evidence="5">Probable member of a two partner secretion pathway (TPS) in which it mediates the secretion of CdiA2.</text>
</comment>
<comment type="subcellular location">
    <subcellularLocation>
        <location evidence="5">Cell outer membrane</location>
    </subcellularLocation>
</comment>
<comment type="disruption phenotype">
    <text evidence="4">Deletion of this gene from the locus expressed in B.thailandensis abrogates growth inhibition.</text>
</comment>
<comment type="similarity">
    <text>Belongs to the TPS (TC 1.B.20) family.</text>
</comment>